<organism>
    <name type="scientific">Pelodictyon phaeoclathratiforme (strain DSM 5477 / BU-1)</name>
    <dbReference type="NCBI Taxonomy" id="324925"/>
    <lineage>
        <taxon>Bacteria</taxon>
        <taxon>Pseudomonadati</taxon>
        <taxon>Chlorobiota</taxon>
        <taxon>Chlorobiia</taxon>
        <taxon>Chlorobiales</taxon>
        <taxon>Chlorobiaceae</taxon>
        <taxon>Chlorobium/Pelodictyon group</taxon>
        <taxon>Pelodictyon</taxon>
    </lineage>
</organism>
<reference key="1">
    <citation type="submission" date="2008-06" db="EMBL/GenBank/DDBJ databases">
        <title>Complete sequence of Pelodictyon phaeoclathratiforme BU-1.</title>
        <authorList>
            <consortium name="US DOE Joint Genome Institute"/>
            <person name="Lucas S."/>
            <person name="Copeland A."/>
            <person name="Lapidus A."/>
            <person name="Glavina del Rio T."/>
            <person name="Dalin E."/>
            <person name="Tice H."/>
            <person name="Bruce D."/>
            <person name="Goodwin L."/>
            <person name="Pitluck S."/>
            <person name="Schmutz J."/>
            <person name="Larimer F."/>
            <person name="Land M."/>
            <person name="Hauser L."/>
            <person name="Kyrpides N."/>
            <person name="Mikhailova N."/>
            <person name="Liu Z."/>
            <person name="Li T."/>
            <person name="Zhao F."/>
            <person name="Overmann J."/>
            <person name="Bryant D.A."/>
            <person name="Richardson P."/>
        </authorList>
    </citation>
    <scope>NUCLEOTIDE SEQUENCE [LARGE SCALE GENOMIC DNA]</scope>
    <source>
        <strain>DSM 5477 / BU-1</strain>
    </source>
</reference>
<sequence>MGKIIGIDLGTTNSCVSVMQGSQPTVIENSEGNRTTPSIIALTKTGDRLVGQAAKRQAITNPKNTIFSIKRFMGRKYDEINDEKKLAPYEIINEGGEARVKINDKIYSPQEVSAMILQKMKQTAEDFLGEKVTEAVITVPAYFNDAQRQATKDAGRIAGLDVKRIINEPTAAALAYGLDRKQTSEKVAVFDLGGGTFDISVLELGDGVFEVKSTDGDTHLGGDNFDQKIIDYIADEFKKQEGIDLRKDAITLQRLKEAAEKAKIELSSRTDTEINLPFITATQEGPKHLVINLTRAKFEALCADLFDKILDPCRRAIKNSKLEMKEIDEVVLVGGSTRIPKVQALVKDFFGKEPNKSVNPDEVVAIGAAIQGGVLKGDVTDVLLLDVTPLSLGIETLGGVMTKLIDANTTIPTRKQEVFSTAGDNQTSVEVHVLQGERPMATDNKTLGRFHLGDIPPSPRGIPQIEVTFDIDSNGILHVSAKDKATGKEQSIKIESSSKLTDAEISKMKEDAKEHAAEDQKRKEEIDTRNIADSLIFSTEKQLKELGDKIPADKRPVLEGSLEKLKEAYKNGTVESLKSAMEELNKEWSEIASHLYQSQGPESSQPETAAQSDSGEKSKKNSGDGNVENAEYEVIDGNDK</sequence>
<protein>
    <recommendedName>
        <fullName evidence="1">Chaperone protein DnaK</fullName>
    </recommendedName>
    <alternativeName>
        <fullName evidence="1">HSP70</fullName>
    </alternativeName>
    <alternativeName>
        <fullName evidence="1">Heat shock 70 kDa protein</fullName>
    </alternativeName>
    <alternativeName>
        <fullName evidence="1">Heat shock protein 70</fullName>
    </alternativeName>
</protein>
<proteinExistence type="inferred from homology"/>
<feature type="chain" id="PRO_1000119737" description="Chaperone protein DnaK">
    <location>
        <begin position="1"/>
        <end position="640"/>
    </location>
</feature>
<feature type="region of interest" description="Disordered" evidence="2">
    <location>
        <begin position="487"/>
        <end position="526"/>
    </location>
</feature>
<feature type="region of interest" description="Disordered" evidence="2">
    <location>
        <begin position="593"/>
        <end position="640"/>
    </location>
</feature>
<feature type="compositionally biased region" description="Basic and acidic residues" evidence="2">
    <location>
        <begin position="501"/>
        <end position="526"/>
    </location>
</feature>
<feature type="compositionally biased region" description="Polar residues" evidence="2">
    <location>
        <begin position="595"/>
        <end position="613"/>
    </location>
</feature>
<feature type="compositionally biased region" description="Acidic residues" evidence="2">
    <location>
        <begin position="630"/>
        <end position="640"/>
    </location>
</feature>
<feature type="modified residue" description="Phosphothreonine; by autocatalysis" evidence="1">
    <location>
        <position position="196"/>
    </location>
</feature>
<name>DNAK_PELPB</name>
<keyword id="KW-0067">ATP-binding</keyword>
<keyword id="KW-0143">Chaperone</keyword>
<keyword id="KW-0547">Nucleotide-binding</keyword>
<keyword id="KW-0597">Phosphoprotein</keyword>
<keyword id="KW-1185">Reference proteome</keyword>
<keyword id="KW-0346">Stress response</keyword>
<gene>
    <name evidence="1" type="primary">dnaK</name>
    <name type="ordered locus">Ppha_2156</name>
</gene>
<dbReference type="EMBL" id="CP001110">
    <property type="protein sequence ID" value="ACF44359.1"/>
    <property type="molecule type" value="Genomic_DNA"/>
</dbReference>
<dbReference type="RefSeq" id="WP_012508836.1">
    <property type="nucleotide sequence ID" value="NC_011060.1"/>
</dbReference>
<dbReference type="SMR" id="B4SDA0"/>
<dbReference type="STRING" id="324925.Ppha_2156"/>
<dbReference type="KEGG" id="pph:Ppha_2156"/>
<dbReference type="eggNOG" id="COG0443">
    <property type="taxonomic scope" value="Bacteria"/>
</dbReference>
<dbReference type="HOGENOM" id="CLU_005965_2_4_10"/>
<dbReference type="OrthoDB" id="9766019at2"/>
<dbReference type="Proteomes" id="UP000002724">
    <property type="component" value="Chromosome"/>
</dbReference>
<dbReference type="GO" id="GO:0005524">
    <property type="term" value="F:ATP binding"/>
    <property type="evidence" value="ECO:0007669"/>
    <property type="project" value="UniProtKB-UniRule"/>
</dbReference>
<dbReference type="GO" id="GO:0140662">
    <property type="term" value="F:ATP-dependent protein folding chaperone"/>
    <property type="evidence" value="ECO:0007669"/>
    <property type="project" value="InterPro"/>
</dbReference>
<dbReference type="GO" id="GO:0051082">
    <property type="term" value="F:unfolded protein binding"/>
    <property type="evidence" value="ECO:0007669"/>
    <property type="project" value="InterPro"/>
</dbReference>
<dbReference type="CDD" id="cd10234">
    <property type="entry name" value="ASKHA_NBD_HSP70_DnaK-like"/>
    <property type="match status" value="1"/>
</dbReference>
<dbReference type="FunFam" id="2.60.34.10:FF:000014">
    <property type="entry name" value="Chaperone protein DnaK HSP70"/>
    <property type="match status" value="1"/>
</dbReference>
<dbReference type="FunFam" id="1.20.1270.10:FF:000001">
    <property type="entry name" value="Molecular chaperone DnaK"/>
    <property type="match status" value="1"/>
</dbReference>
<dbReference type="FunFam" id="3.30.420.40:FF:000004">
    <property type="entry name" value="Molecular chaperone DnaK"/>
    <property type="match status" value="1"/>
</dbReference>
<dbReference type="FunFam" id="3.90.640.10:FF:000003">
    <property type="entry name" value="Molecular chaperone DnaK"/>
    <property type="match status" value="1"/>
</dbReference>
<dbReference type="Gene3D" id="1.20.1270.10">
    <property type="match status" value="1"/>
</dbReference>
<dbReference type="Gene3D" id="3.30.420.40">
    <property type="match status" value="2"/>
</dbReference>
<dbReference type="Gene3D" id="3.90.640.10">
    <property type="entry name" value="Actin, Chain A, domain 4"/>
    <property type="match status" value="1"/>
</dbReference>
<dbReference type="Gene3D" id="2.60.34.10">
    <property type="entry name" value="Substrate Binding Domain Of DNAk, Chain A, domain 1"/>
    <property type="match status" value="1"/>
</dbReference>
<dbReference type="HAMAP" id="MF_00332">
    <property type="entry name" value="DnaK"/>
    <property type="match status" value="1"/>
</dbReference>
<dbReference type="InterPro" id="IPR043129">
    <property type="entry name" value="ATPase_NBD"/>
</dbReference>
<dbReference type="InterPro" id="IPR012725">
    <property type="entry name" value="Chaperone_DnaK"/>
</dbReference>
<dbReference type="InterPro" id="IPR018181">
    <property type="entry name" value="Heat_shock_70_CS"/>
</dbReference>
<dbReference type="InterPro" id="IPR029048">
    <property type="entry name" value="HSP70_C_sf"/>
</dbReference>
<dbReference type="InterPro" id="IPR029047">
    <property type="entry name" value="HSP70_peptide-bd_sf"/>
</dbReference>
<dbReference type="InterPro" id="IPR013126">
    <property type="entry name" value="Hsp_70_fam"/>
</dbReference>
<dbReference type="NCBIfam" id="NF001413">
    <property type="entry name" value="PRK00290.1"/>
    <property type="match status" value="1"/>
</dbReference>
<dbReference type="NCBIfam" id="NF003520">
    <property type="entry name" value="PRK05183.1"/>
    <property type="match status" value="1"/>
</dbReference>
<dbReference type="NCBIfam" id="TIGR02350">
    <property type="entry name" value="prok_dnaK"/>
    <property type="match status" value="1"/>
</dbReference>
<dbReference type="PANTHER" id="PTHR19375">
    <property type="entry name" value="HEAT SHOCK PROTEIN 70KDA"/>
    <property type="match status" value="1"/>
</dbReference>
<dbReference type="Pfam" id="PF00012">
    <property type="entry name" value="HSP70"/>
    <property type="match status" value="1"/>
</dbReference>
<dbReference type="PRINTS" id="PR00301">
    <property type="entry name" value="HEATSHOCK70"/>
</dbReference>
<dbReference type="SUPFAM" id="SSF53067">
    <property type="entry name" value="Actin-like ATPase domain"/>
    <property type="match status" value="2"/>
</dbReference>
<dbReference type="SUPFAM" id="SSF100934">
    <property type="entry name" value="Heat shock protein 70kD (HSP70), C-terminal subdomain"/>
    <property type="match status" value="1"/>
</dbReference>
<dbReference type="SUPFAM" id="SSF100920">
    <property type="entry name" value="Heat shock protein 70kD (HSP70), peptide-binding domain"/>
    <property type="match status" value="1"/>
</dbReference>
<dbReference type="PROSITE" id="PS00297">
    <property type="entry name" value="HSP70_1"/>
    <property type="match status" value="1"/>
</dbReference>
<dbReference type="PROSITE" id="PS00329">
    <property type="entry name" value="HSP70_2"/>
    <property type="match status" value="1"/>
</dbReference>
<dbReference type="PROSITE" id="PS01036">
    <property type="entry name" value="HSP70_3"/>
    <property type="match status" value="1"/>
</dbReference>
<comment type="function">
    <text evidence="1">Acts as a chaperone.</text>
</comment>
<comment type="induction">
    <text evidence="1">By stress conditions e.g. heat shock.</text>
</comment>
<comment type="similarity">
    <text evidence="1">Belongs to the heat shock protein 70 family.</text>
</comment>
<evidence type="ECO:0000255" key="1">
    <source>
        <dbReference type="HAMAP-Rule" id="MF_00332"/>
    </source>
</evidence>
<evidence type="ECO:0000256" key="2">
    <source>
        <dbReference type="SAM" id="MobiDB-lite"/>
    </source>
</evidence>
<accession>B4SDA0</accession>